<dbReference type="EC" id="2.7.1.201" evidence="4"/>
<dbReference type="EMBL" id="U06195">
    <property type="protein sequence ID" value="AAC43381.1"/>
    <property type="molecule type" value="Genomic_DNA"/>
</dbReference>
<dbReference type="EMBL" id="U14003">
    <property type="protein sequence ID" value="AAA97137.1"/>
    <property type="molecule type" value="Genomic_DNA"/>
</dbReference>
<dbReference type="EMBL" id="U00096">
    <property type="protein sequence ID" value="AAC77197.1"/>
    <property type="molecule type" value="Genomic_DNA"/>
</dbReference>
<dbReference type="EMBL" id="AP009048">
    <property type="protein sequence ID" value="BAE78239.1"/>
    <property type="molecule type" value="Genomic_DNA"/>
</dbReference>
<dbReference type="PIR" id="C65236">
    <property type="entry name" value="C65236"/>
</dbReference>
<dbReference type="RefSeq" id="NP_418661.1">
    <property type="nucleotide sequence ID" value="NC_000913.3"/>
</dbReference>
<dbReference type="RefSeq" id="WP_001407733.1">
    <property type="nucleotide sequence ID" value="NZ_LN832404.1"/>
</dbReference>
<dbReference type="SMR" id="P36672"/>
<dbReference type="BioGRID" id="4262709">
    <property type="interactions" value="12"/>
</dbReference>
<dbReference type="FunCoup" id="P36672">
    <property type="interactions" value="220"/>
</dbReference>
<dbReference type="IntAct" id="P36672">
    <property type="interactions" value="1"/>
</dbReference>
<dbReference type="MINT" id="P36672"/>
<dbReference type="STRING" id="511145.b4240"/>
<dbReference type="TCDB" id="4.A.1.2.4">
    <property type="family name" value="the pts glucose-glucoside (glc) family"/>
</dbReference>
<dbReference type="iPTMnet" id="P36672"/>
<dbReference type="jPOST" id="P36672"/>
<dbReference type="PaxDb" id="511145-b4240"/>
<dbReference type="EnsemblBacteria" id="AAC77197">
    <property type="protein sequence ID" value="AAC77197"/>
    <property type="gene ID" value="b4240"/>
</dbReference>
<dbReference type="GeneID" id="948761"/>
<dbReference type="KEGG" id="ecj:JW4199"/>
<dbReference type="KEGG" id="eco:b4240"/>
<dbReference type="PATRIC" id="fig|1411691.4.peg.2461"/>
<dbReference type="EchoBASE" id="EB2048"/>
<dbReference type="eggNOG" id="COG1263">
    <property type="taxonomic scope" value="Bacteria"/>
</dbReference>
<dbReference type="eggNOG" id="COG1264">
    <property type="taxonomic scope" value="Bacteria"/>
</dbReference>
<dbReference type="HOGENOM" id="CLU_012312_2_1_6"/>
<dbReference type="InParanoid" id="P36672"/>
<dbReference type="OMA" id="VIGDIKM"/>
<dbReference type="OrthoDB" id="92465at2"/>
<dbReference type="PhylomeDB" id="P36672"/>
<dbReference type="BioCyc" id="EcoCyc:TREB-MONOMER"/>
<dbReference type="BioCyc" id="MetaCyc:TREB-MONOMER"/>
<dbReference type="BRENDA" id="2.7.1.201">
    <property type="organism ID" value="2026"/>
</dbReference>
<dbReference type="SABIO-RK" id="P36672"/>
<dbReference type="PRO" id="PR:P36672"/>
<dbReference type="Proteomes" id="UP000000625">
    <property type="component" value="Chromosome"/>
</dbReference>
<dbReference type="GO" id="GO:0005886">
    <property type="term" value="C:plasma membrane"/>
    <property type="evidence" value="ECO:0000314"/>
    <property type="project" value="EcoCyc"/>
</dbReference>
<dbReference type="GO" id="GO:0016301">
    <property type="term" value="F:kinase activity"/>
    <property type="evidence" value="ECO:0007669"/>
    <property type="project" value="UniProtKB-KW"/>
</dbReference>
<dbReference type="GO" id="GO:0008982">
    <property type="term" value="F:protein-N(PI)-phosphohistidine-sugar phosphotransferase activity"/>
    <property type="evidence" value="ECO:0007669"/>
    <property type="project" value="InterPro"/>
</dbReference>
<dbReference type="GO" id="GO:0090589">
    <property type="term" value="F:protein-phosphocysteine-trehalose phosphotransferase system transporter activity"/>
    <property type="evidence" value="ECO:0000314"/>
    <property type="project" value="EcoCyc"/>
</dbReference>
<dbReference type="GO" id="GO:0015574">
    <property type="term" value="F:trehalose transmembrane transporter activity"/>
    <property type="evidence" value="ECO:0007669"/>
    <property type="project" value="InterPro"/>
</dbReference>
<dbReference type="GO" id="GO:0009401">
    <property type="term" value="P:phosphoenolpyruvate-dependent sugar phosphotransferase system"/>
    <property type="evidence" value="ECO:0000314"/>
    <property type="project" value="EcoCyc"/>
</dbReference>
<dbReference type="GO" id="GO:0015771">
    <property type="term" value="P:trehalose transport"/>
    <property type="evidence" value="ECO:0000314"/>
    <property type="project" value="EcoCyc"/>
</dbReference>
<dbReference type="CDD" id="cd00212">
    <property type="entry name" value="PTS_IIB_glc"/>
    <property type="match status" value="1"/>
</dbReference>
<dbReference type="FunFam" id="3.30.1360.60:FF:000001">
    <property type="entry name" value="PTS system glucose-specific IIBC component PtsG"/>
    <property type="match status" value="1"/>
</dbReference>
<dbReference type="Gene3D" id="3.30.1360.60">
    <property type="entry name" value="Glucose permease domain IIB"/>
    <property type="match status" value="1"/>
</dbReference>
<dbReference type="InterPro" id="IPR036878">
    <property type="entry name" value="Glu_permease_IIB"/>
</dbReference>
<dbReference type="InterPro" id="IPR018113">
    <property type="entry name" value="PTrfase_EIIB_Cys"/>
</dbReference>
<dbReference type="InterPro" id="IPR003352">
    <property type="entry name" value="PTS_EIIC"/>
</dbReference>
<dbReference type="InterPro" id="IPR013013">
    <property type="entry name" value="PTS_EIIC_1"/>
</dbReference>
<dbReference type="InterPro" id="IPR001996">
    <property type="entry name" value="PTS_IIB_1"/>
</dbReference>
<dbReference type="InterPro" id="IPR011296">
    <property type="entry name" value="PTS_IIBC_treh"/>
</dbReference>
<dbReference type="InterPro" id="IPR004719">
    <property type="entry name" value="PTS_maltose/Glc_sub_IIC"/>
</dbReference>
<dbReference type="InterPro" id="IPR050558">
    <property type="entry name" value="PTS_Sugar-Specific_Components"/>
</dbReference>
<dbReference type="NCBIfam" id="TIGR00826">
    <property type="entry name" value="EIIB_glc"/>
    <property type="match status" value="1"/>
</dbReference>
<dbReference type="NCBIfam" id="NF008236">
    <property type="entry name" value="PRK11007.1"/>
    <property type="match status" value="1"/>
</dbReference>
<dbReference type="NCBIfam" id="TIGR00852">
    <property type="entry name" value="pts-Glc"/>
    <property type="match status" value="1"/>
</dbReference>
<dbReference type="NCBIfam" id="TIGR01992">
    <property type="entry name" value="PTS-IIBC-Tre"/>
    <property type="match status" value="1"/>
</dbReference>
<dbReference type="PANTHER" id="PTHR30175">
    <property type="entry name" value="PHOSPHOTRANSFERASE SYSTEM TRANSPORT PROTEIN"/>
    <property type="match status" value="1"/>
</dbReference>
<dbReference type="PANTHER" id="PTHR30175:SF1">
    <property type="entry name" value="PTS SYSTEM ARBUTIN-, CELLOBIOSE-, AND SALICIN-SPECIFIC EIIBC COMPONENT-RELATED"/>
    <property type="match status" value="1"/>
</dbReference>
<dbReference type="Pfam" id="PF00367">
    <property type="entry name" value="PTS_EIIB"/>
    <property type="match status" value="1"/>
</dbReference>
<dbReference type="Pfam" id="PF02378">
    <property type="entry name" value="PTS_EIIC"/>
    <property type="match status" value="1"/>
</dbReference>
<dbReference type="SUPFAM" id="SSF55604">
    <property type="entry name" value="Glucose permease domain IIB"/>
    <property type="match status" value="1"/>
</dbReference>
<dbReference type="PROSITE" id="PS51098">
    <property type="entry name" value="PTS_EIIB_TYPE_1"/>
    <property type="match status" value="1"/>
</dbReference>
<dbReference type="PROSITE" id="PS01035">
    <property type="entry name" value="PTS_EIIB_TYPE_1_CYS"/>
    <property type="match status" value="1"/>
</dbReference>
<dbReference type="PROSITE" id="PS51103">
    <property type="entry name" value="PTS_EIIC_TYPE_1"/>
    <property type="match status" value="1"/>
</dbReference>
<sequence>MMSKINQTDIDRLIELVGGRGNIATVSHCITRLRFVLNQPANARPKEIEQLPMVKGCFTNAGQFQVVIGTNVGDYYQALIASTGQAQVDKEQVKKAARHNMKWHEQLISHFAVIFFPLLPALISGGLILGFRNVIGDLPMSNGQTLAQMYPSLQTIYDFLWLIGEAIFFYLPVGICWSAVKKMGGTPILGIVLGVTLVSPQLMNAYLLGQQLPEVWDFGMFSIAKVGYQAQVIPALLAGLALGVIETRLKRIVPDYLYLVVVPVCSLILAVFLAHALIGPFGRMIGDGVAFAVRHLMTGSFAPIGAALFGFLYAPLVITGVHQTTLAIDLQMIQSMGGTPVWPLIALSNIAQGSAVIGIIISSRKHNEREISVPAAISAWLGVTEPAMYGINLKYRFPMLCAMIGSGLAGLLCGLNGVMANGIGVGGLPGILSIQPSYWQVFALAMAIAIIIPIVLTSFIYQRKYRLGTLDIV</sequence>
<feature type="chain" id="PRO_0000186677" description="PTS system trehalose-specific EIIBC component">
    <location>
        <begin position="1"/>
        <end position="473"/>
    </location>
</feature>
<feature type="topological domain" description="Cytoplasmic" evidence="1">
    <location>
        <begin position="1"/>
        <end position="110"/>
    </location>
</feature>
<feature type="transmembrane region" description="Helical" evidence="3">
    <location>
        <begin position="111"/>
        <end position="131"/>
    </location>
</feature>
<feature type="topological domain" description="Periplasmic" evidence="1">
    <location>
        <begin position="132"/>
        <end position="158"/>
    </location>
</feature>
<feature type="transmembrane region" description="Helical" evidence="3">
    <location>
        <begin position="159"/>
        <end position="179"/>
    </location>
</feature>
<feature type="topological domain" description="Cytoplasmic" evidence="1">
    <location>
        <begin position="180"/>
        <end position="187"/>
    </location>
</feature>
<feature type="transmembrane region" description="Helical" evidence="3">
    <location>
        <begin position="188"/>
        <end position="208"/>
    </location>
</feature>
<feature type="topological domain" description="Periplasmic" evidence="1">
    <location>
        <begin position="209"/>
        <end position="225"/>
    </location>
</feature>
<feature type="transmembrane region" description="Helical" evidence="3">
    <location>
        <begin position="226"/>
        <end position="246"/>
    </location>
</feature>
<feature type="topological domain" description="Cytoplasmic" evidence="1">
    <location>
        <begin position="247"/>
        <end position="258"/>
    </location>
</feature>
<feature type="transmembrane region" description="Helical" evidence="3">
    <location>
        <begin position="259"/>
        <end position="279"/>
    </location>
</feature>
<feature type="topological domain" description="Periplasmic" evidence="1">
    <location>
        <begin position="280"/>
        <end position="300"/>
    </location>
</feature>
<feature type="transmembrane region" description="Helical" evidence="3">
    <location>
        <begin position="301"/>
        <end position="321"/>
    </location>
</feature>
<feature type="topological domain" description="Cytoplasmic" evidence="1">
    <location>
        <begin position="322"/>
        <end position="340"/>
    </location>
</feature>
<feature type="transmembrane region" description="Helical" evidence="3">
    <location>
        <begin position="341"/>
        <end position="361"/>
    </location>
</feature>
<feature type="topological domain" description="Periplasmic" evidence="1">
    <location>
        <begin position="362"/>
        <end position="370"/>
    </location>
</feature>
<feature type="transmembrane region" description="Helical" evidence="3">
    <location>
        <begin position="371"/>
        <end position="391"/>
    </location>
</feature>
<feature type="topological domain" description="Cytoplasmic" evidence="1">
    <location>
        <begin position="392"/>
        <end position="398"/>
    </location>
</feature>
<feature type="transmembrane region" description="Helical" evidence="3">
    <location>
        <begin position="399"/>
        <end position="419"/>
    </location>
</feature>
<feature type="topological domain" description="Periplasmic" evidence="1">
    <location>
        <begin position="420"/>
        <end position="440"/>
    </location>
</feature>
<feature type="transmembrane region" description="Helical" evidence="3">
    <location>
        <begin position="441"/>
        <end position="461"/>
    </location>
</feature>
<feature type="topological domain" description="Cytoplasmic" evidence="1">
    <location>
        <begin position="462"/>
        <end position="473"/>
    </location>
</feature>
<feature type="domain" description="PTS EIIB type-1" evidence="2">
    <location>
        <begin position="1"/>
        <end position="89"/>
    </location>
</feature>
<feature type="domain" description="PTS EIIC type-1" evidence="3">
    <location>
        <begin position="109"/>
        <end position="473"/>
    </location>
</feature>
<feature type="active site" description="Phosphocysteine intermediate; for EIIB activity" evidence="2">
    <location>
        <position position="29"/>
    </location>
</feature>
<feature type="modified residue" description="Phosphocysteine; by EIIA" evidence="8">
    <location>
        <position position="29"/>
    </location>
</feature>
<feature type="sequence conflict" description="In Ref. 1; AAC43381." evidence="7" ref="1">
    <original>GL</original>
    <variation>PF</variation>
    <location>
        <begin position="126"/>
        <end position="127"/>
    </location>
</feature>
<feature type="sequence conflict" description="In Ref. 2; AAA97137." evidence="7" ref="2">
    <original>GGTPILGIVLG</original>
    <variation>AQRRSLVSCLA</variation>
    <location>
        <begin position="184"/>
        <end position="194"/>
    </location>
</feature>
<feature type="sequence conflict" description="In Ref. 1; AAC43381." evidence="7" ref="1">
    <location>
        <position position="187"/>
    </location>
</feature>
<feature type="sequence conflict" description="In Ref. 1; AAC43381." evidence="7" ref="1">
    <original>A</original>
    <variation>Q</variation>
    <location>
        <position position="307"/>
    </location>
</feature>
<feature type="sequence conflict" description="In Ref. 1; AAC43381." evidence="7" ref="1">
    <original>PGILSIQPSYWQVFALAMAIAIIIPIVLTSFIYQRKYRLGTLDIV</original>
    <variation>RNSLDSTELLAGVCAGNGYRHHHPDCTHLVYLSAEIPPGHAGHCLIFFGAQLRSHSQE</variation>
    <location>
        <begin position="429"/>
        <end position="473"/>
    </location>
</feature>
<protein>
    <recommendedName>
        <fullName evidence="6">PTS system trehalose-specific EIIBC component</fullName>
    </recommendedName>
    <alternativeName>
        <fullName evidence="6">EIIBC-Tre</fullName>
        <shortName evidence="6">EII-Tre</shortName>
    </alternativeName>
    <domain>
        <recommendedName>
            <fullName evidence="6">Trehalose-specific phosphotransferase enzyme IIB component</fullName>
            <ecNumber evidence="4">2.7.1.201</ecNumber>
        </recommendedName>
        <alternativeName>
            <fullName evidence="6">PTS system trehalose-specific EIIB component</fullName>
        </alternativeName>
    </domain>
    <domain>
        <recommendedName>
            <fullName evidence="6">Trehalose permease IIC component</fullName>
        </recommendedName>
        <alternativeName>
            <fullName evidence="6">PTS system trehalose-specific EIIC component</fullName>
        </alternativeName>
    </domain>
</protein>
<name>PTTBC_ECOLI</name>
<proteinExistence type="evidence at protein level"/>
<keyword id="KW-0997">Cell inner membrane</keyword>
<keyword id="KW-1003">Cell membrane</keyword>
<keyword id="KW-0418">Kinase</keyword>
<keyword id="KW-0472">Membrane</keyword>
<keyword id="KW-0597">Phosphoprotein</keyword>
<keyword id="KW-0598">Phosphotransferase system</keyword>
<keyword id="KW-1185">Reference proteome</keyword>
<keyword id="KW-0762">Sugar transport</keyword>
<keyword id="KW-0808">Transferase</keyword>
<keyword id="KW-0812">Transmembrane</keyword>
<keyword id="KW-1133">Transmembrane helix</keyword>
<keyword id="KW-0813">Transport</keyword>
<reference key="1">
    <citation type="journal article" date="1995" name="J. Bacteriol.">
        <title>Molecular analysis of treB encoding the Escherichia coli enzyme II specific for trehalose.</title>
        <authorList>
            <person name="Klein W."/>
            <person name="Horlacher R."/>
            <person name="Boos W."/>
        </authorList>
    </citation>
    <scope>NUCLEOTIDE SEQUENCE [GENOMIC DNA]</scope>
    <scope>FUNCTION</scope>
    <scope>INDUCTION</scope>
    <source>
        <strain>K12</strain>
    </source>
</reference>
<reference key="2">
    <citation type="journal article" date="1995" name="Nucleic Acids Res.">
        <title>Analysis of the Escherichia coli genome VI: DNA sequence of the region from 92.8 through 100 minutes.</title>
        <authorList>
            <person name="Burland V.D."/>
            <person name="Plunkett G. III"/>
            <person name="Sofia H.J."/>
            <person name="Daniels D.L."/>
            <person name="Blattner F.R."/>
        </authorList>
    </citation>
    <scope>NUCLEOTIDE SEQUENCE [LARGE SCALE GENOMIC DNA]</scope>
    <source>
        <strain>K12 / MG1655 / ATCC 47076</strain>
    </source>
</reference>
<reference key="3">
    <citation type="journal article" date="1997" name="Science">
        <title>The complete genome sequence of Escherichia coli K-12.</title>
        <authorList>
            <person name="Blattner F.R."/>
            <person name="Plunkett G. III"/>
            <person name="Bloch C.A."/>
            <person name="Perna N.T."/>
            <person name="Burland V."/>
            <person name="Riley M."/>
            <person name="Collado-Vides J."/>
            <person name="Glasner J.D."/>
            <person name="Rode C.K."/>
            <person name="Mayhew G.F."/>
            <person name="Gregor J."/>
            <person name="Davis N.W."/>
            <person name="Kirkpatrick H.A."/>
            <person name="Goeden M.A."/>
            <person name="Rose D.J."/>
            <person name="Mau B."/>
            <person name="Shao Y."/>
        </authorList>
    </citation>
    <scope>NUCLEOTIDE SEQUENCE [LARGE SCALE GENOMIC DNA]</scope>
    <scope>SEQUENCE REVISION TO 184-194</scope>
    <source>
        <strain>K12 / MG1655 / ATCC 47076</strain>
    </source>
</reference>
<reference key="4">
    <citation type="journal article" date="2006" name="Mol. Syst. Biol.">
        <title>Highly accurate genome sequences of Escherichia coli K-12 strains MG1655 and W3110.</title>
        <authorList>
            <person name="Hayashi K."/>
            <person name="Morooka N."/>
            <person name="Yamamoto Y."/>
            <person name="Fujita K."/>
            <person name="Isono K."/>
            <person name="Choi S."/>
            <person name="Ohtsubo E."/>
            <person name="Baba T."/>
            <person name="Wanner B.L."/>
            <person name="Mori H."/>
            <person name="Horiuchi T."/>
        </authorList>
    </citation>
    <scope>NUCLEOTIDE SEQUENCE [LARGE SCALE GENOMIC DNA]</scope>
    <source>
        <strain>K12 / W3110 / ATCC 27325 / DSM 5911</strain>
    </source>
</reference>
<reference key="5">
    <citation type="journal article" date="1990" name="J. Bacteriol.">
        <title>Trehalose transport and metabolism in Escherichia coli.</title>
        <authorList>
            <person name="Boos W."/>
            <person name="Ehmann U."/>
            <person name="Forkl H."/>
            <person name="Klein W."/>
            <person name="Rimmele M."/>
            <person name="Postma P."/>
        </authorList>
    </citation>
    <scope>FUNCTION</scope>
    <scope>CATALYTIC ACTIVITY</scope>
    <scope>BIOPHYSICOCHEMICAL PROPERTIES</scope>
    <scope>INDUCTION</scope>
    <scope>SUBCELLULAR LOCATION</scope>
    <scope>PHOSPHORYLATION AT CYS-29</scope>
</reference>
<reference key="6">
    <citation type="journal article" date="2005" name="Science">
        <title>Global topology analysis of the Escherichia coli inner membrane proteome.</title>
        <authorList>
            <person name="Daley D.O."/>
            <person name="Rapp M."/>
            <person name="Granseth E."/>
            <person name="Melen K."/>
            <person name="Drew D."/>
            <person name="von Heijne G."/>
        </authorList>
    </citation>
    <scope>TOPOLOGY [LARGE SCALE ANALYSIS]</scope>
    <source>
        <strain>K12 / MG1655 / ATCC 47076</strain>
    </source>
</reference>
<accession>P36672</accession>
<accession>Q2M667</accession>
<evidence type="ECO:0000255" key="1"/>
<evidence type="ECO:0000255" key="2">
    <source>
        <dbReference type="PROSITE-ProRule" id="PRU00421"/>
    </source>
</evidence>
<evidence type="ECO:0000255" key="3">
    <source>
        <dbReference type="PROSITE-ProRule" id="PRU00426"/>
    </source>
</evidence>
<evidence type="ECO:0000269" key="4">
    <source>
    </source>
</evidence>
<evidence type="ECO:0000269" key="5">
    <source>
    </source>
</evidence>
<evidence type="ECO:0000303" key="6">
    <source>
    </source>
</evidence>
<evidence type="ECO:0000305" key="7"/>
<evidence type="ECO:0000305" key="8">
    <source>
    </source>
</evidence>
<evidence type="ECO:0000305" key="9">
    <source>
    </source>
</evidence>
<gene>
    <name type="primary">treB</name>
    <name type="ordered locus">b4240</name>
    <name type="ordered locus">JW4199</name>
</gene>
<comment type="function">
    <text evidence="4 9">The phosphoenolpyruvate-dependent sugar phosphotransferase system (sugar PTS), a major carbohydrate active transport system, catalyzes the phosphorylation of incoming sugar substrates concomitantly with their translocation across the cell membrane. This system is involved in trehalose transport at low osmolarity.</text>
</comment>
<comment type="catalytic activity">
    <reaction evidence="4">
        <text>alpha,alpha-trehalose(out) + N(pros)-phospho-L-histidyl-[protein] = alpha,alpha-trehalose 6-phosphate(in) + L-histidyl-[protein]</text>
        <dbReference type="Rhea" id="RHEA:33371"/>
        <dbReference type="Rhea" id="RHEA-COMP:9745"/>
        <dbReference type="Rhea" id="RHEA-COMP:9746"/>
        <dbReference type="ChEBI" id="CHEBI:16551"/>
        <dbReference type="ChEBI" id="CHEBI:29979"/>
        <dbReference type="ChEBI" id="CHEBI:58429"/>
        <dbReference type="ChEBI" id="CHEBI:64837"/>
        <dbReference type="EC" id="2.7.1.201"/>
    </reaction>
</comment>
<comment type="biophysicochemical properties">
    <kinetics>
        <KM evidence="4">16 uM for trehalose</KM>
        <Vmax evidence="4">9.0 nmol/min/mg enzyme toward trehalose</Vmax>
    </kinetics>
</comment>
<comment type="subcellular location">
    <subcellularLocation>
        <location evidence="3 8">Cell inner membrane</location>
        <topology evidence="3">Multi-pass membrane protein</topology>
    </subcellularLocation>
</comment>
<comment type="induction">
    <text evidence="4 5">At low osmolarity, treB is induced by trehalose-6-phosphate, but it becomes uninducible at high osmolarity due to induction of trehalose-6-phosphate phosphatase OstB which is part of the biosynthetic pathway of trehalose synthesis at high osmolarity. Repressed by TreR.</text>
</comment>
<comment type="domain">
    <text evidence="2 8">The PTS EIIB type-1 domain is phosphorylated by phospho-EIIA-Glc (EIII-Glc) on a cysteinyl residue. Then, it transfers the phosphoryl group to the sugar substrate concomitantly with the sugar uptake processed by the PTS EIIC type-1 domain.</text>
</comment>
<comment type="domain">
    <text evidence="3">The EIIC domain type-1 forms the PTS system translocation channel and contains the specific substrate-binding site.</text>
</comment>
<comment type="miscellaneous">
    <text evidence="8">E.coli does not possess a trehalose-specific phosphotransferase enzyme IIA component, however it seems that it use the glucose-specific phosphotransferase enzyme IIA component to delivers trehalose-6-phosphate into the cell.</text>
</comment>
<organism>
    <name type="scientific">Escherichia coli (strain K12)</name>
    <dbReference type="NCBI Taxonomy" id="83333"/>
    <lineage>
        <taxon>Bacteria</taxon>
        <taxon>Pseudomonadati</taxon>
        <taxon>Pseudomonadota</taxon>
        <taxon>Gammaproteobacteria</taxon>
        <taxon>Enterobacterales</taxon>
        <taxon>Enterobacteriaceae</taxon>
        <taxon>Escherichia</taxon>
    </lineage>
</organism>